<reference key="1">
    <citation type="journal article" date="2008" name="J. Bacteriol.">
        <title>The complete genome sequence of Actinobacillus pleuropneumoniae L20 (serotype 5b).</title>
        <authorList>
            <person name="Foote S.J."/>
            <person name="Bosse J.T."/>
            <person name="Bouevitch A.B."/>
            <person name="Langford P.R."/>
            <person name="Young N.M."/>
            <person name="Nash J.H.E."/>
        </authorList>
    </citation>
    <scope>NUCLEOTIDE SEQUENCE [LARGE SCALE GENOMIC DNA]</scope>
    <source>
        <strain>L20</strain>
    </source>
</reference>
<protein>
    <recommendedName>
        <fullName evidence="1">LPS-assembly protein LptD</fullName>
    </recommendedName>
</protein>
<organism>
    <name type="scientific">Actinobacillus pleuropneumoniae serotype 5b (strain L20)</name>
    <dbReference type="NCBI Taxonomy" id="416269"/>
    <lineage>
        <taxon>Bacteria</taxon>
        <taxon>Pseudomonadati</taxon>
        <taxon>Pseudomonadota</taxon>
        <taxon>Gammaproteobacteria</taxon>
        <taxon>Pasteurellales</taxon>
        <taxon>Pasteurellaceae</taxon>
        <taxon>Actinobacillus</taxon>
    </lineage>
</organism>
<proteinExistence type="inferred from homology"/>
<dbReference type="EMBL" id="CP000569">
    <property type="protein sequence ID" value="ABN74056.1"/>
    <property type="molecule type" value="Genomic_DNA"/>
</dbReference>
<dbReference type="RefSeq" id="WP_005610226.1">
    <property type="nucleotide sequence ID" value="NC_009053.1"/>
</dbReference>
<dbReference type="SMR" id="A3N0X0"/>
<dbReference type="STRING" id="416269.APL_0962"/>
<dbReference type="EnsemblBacteria" id="ABN74056">
    <property type="protein sequence ID" value="ABN74056"/>
    <property type="gene ID" value="APL_0962"/>
</dbReference>
<dbReference type="KEGG" id="apl:APL_0962"/>
<dbReference type="eggNOG" id="COG1452">
    <property type="taxonomic scope" value="Bacteria"/>
</dbReference>
<dbReference type="HOGENOM" id="CLU_009039_2_0_6"/>
<dbReference type="Proteomes" id="UP000001432">
    <property type="component" value="Chromosome"/>
</dbReference>
<dbReference type="GO" id="GO:0009279">
    <property type="term" value="C:cell outer membrane"/>
    <property type="evidence" value="ECO:0007669"/>
    <property type="project" value="UniProtKB-SubCell"/>
</dbReference>
<dbReference type="GO" id="GO:1990351">
    <property type="term" value="C:transporter complex"/>
    <property type="evidence" value="ECO:0007669"/>
    <property type="project" value="TreeGrafter"/>
</dbReference>
<dbReference type="GO" id="GO:0043165">
    <property type="term" value="P:Gram-negative-bacterium-type cell outer membrane assembly"/>
    <property type="evidence" value="ECO:0007669"/>
    <property type="project" value="UniProtKB-UniRule"/>
</dbReference>
<dbReference type="GO" id="GO:0015920">
    <property type="term" value="P:lipopolysaccharide transport"/>
    <property type="evidence" value="ECO:0007669"/>
    <property type="project" value="InterPro"/>
</dbReference>
<dbReference type="Gene3D" id="2.60.450.10">
    <property type="entry name" value="Lipopolysaccharide (LPS) transport protein A like domain"/>
    <property type="match status" value="1"/>
</dbReference>
<dbReference type="HAMAP" id="MF_01411">
    <property type="entry name" value="LPS_assembly_LptD"/>
    <property type="match status" value="1"/>
</dbReference>
<dbReference type="InterPro" id="IPR020889">
    <property type="entry name" value="LipoPS_assembly_LptD"/>
</dbReference>
<dbReference type="InterPro" id="IPR050218">
    <property type="entry name" value="LptD"/>
</dbReference>
<dbReference type="InterPro" id="IPR007543">
    <property type="entry name" value="LptD_C"/>
</dbReference>
<dbReference type="InterPro" id="IPR005653">
    <property type="entry name" value="OstA-like_N"/>
</dbReference>
<dbReference type="NCBIfam" id="NF002997">
    <property type="entry name" value="PRK03761.1"/>
    <property type="match status" value="1"/>
</dbReference>
<dbReference type="PANTHER" id="PTHR30189">
    <property type="entry name" value="LPS-ASSEMBLY PROTEIN"/>
    <property type="match status" value="1"/>
</dbReference>
<dbReference type="PANTHER" id="PTHR30189:SF1">
    <property type="entry name" value="LPS-ASSEMBLY PROTEIN LPTD"/>
    <property type="match status" value="1"/>
</dbReference>
<dbReference type="Pfam" id="PF04453">
    <property type="entry name" value="LptD"/>
    <property type="match status" value="1"/>
</dbReference>
<dbReference type="Pfam" id="PF03968">
    <property type="entry name" value="LptD_N"/>
    <property type="match status" value="1"/>
</dbReference>
<accession>A3N0X0</accession>
<sequence length="778" mass="89823">MKTRYSVLSVAMTAAFYTQYAQADLREQCLLGVPHFQGEEVTGDQTMMPIEIEADNAVINQPKDATYTGDVAIKQGNRSLFADEVRVEQNGEQERRAFLKGSYRYQDNLIQAHGRDAAMDLGSETAELQNTEFQLVGRQGRGTAESGSFNHNKRILKNATFTACLPNDNAWSIEGNEMIQHIDEEYAEIWHARFKVLGMPVFYSPYLQFPIGDRRRSGLLIPNFHRSSKDGFAYSQPFYWNIAPNMDATITPTYYSRRGWQISPEYRYLTKLGEGIVAGEYIGKDRLDEYRPDDNDRKRYLMHWRHNMSFLTGWRLYVDYTKVSDKRYFSDFDSEYGSSTDGYATQQFKLGYYQPNYNLSISGKKFQTFDELDVGPYRVLPQIDFNYYNDELVKGGDFKLFAQTARFENDSKLMPKAWRFHVEPTLNFPLANRYGSLNFETKLYATHYLQEKGSSKQADDMDKNVTRIIPQVKVDLQTVLEADKQLFKGFNQTFEPRVQYVYRPYKDQSNIGSGLNQSVSFGYDSALLQSDYFSLFNDRRYSGLDRISSANLITAGGTNRFFNEKTGVEVFNFSIGQTYYLSPSKIDDLSQNSTTKRSSSWALESNWKFHRKWNWHGAYQYDTRLNQTSLANTSLQYKPSQDKLVQLSYRFASKDYINQNLRSNTYGQDIKQVGAVVGWELTDRVAFMASHYHDIALKKPVESQLSVNYNTCCWSANVYVARKLTATPIGSPDTINDLYYDNKFGVNFELRFGTNYSSGVRKMLKKGMIPYTEQYGIN</sequence>
<gene>
    <name evidence="1" type="primary">lptD</name>
    <name type="synonym">imp</name>
    <name type="synonym">ostA</name>
    <name type="ordered locus">APL_0962</name>
</gene>
<comment type="function">
    <text evidence="1">Together with LptE, is involved in the assembly of lipopolysaccharide (LPS) at the surface of the outer membrane.</text>
</comment>
<comment type="subunit">
    <text evidence="1">Component of the lipopolysaccharide transport and assembly complex. Interacts with LptE and LptA.</text>
</comment>
<comment type="subcellular location">
    <subcellularLocation>
        <location evidence="1">Cell outer membrane</location>
    </subcellularLocation>
</comment>
<comment type="similarity">
    <text evidence="1">Belongs to the LptD family.</text>
</comment>
<name>LPTD_ACTP2</name>
<evidence type="ECO:0000255" key="1">
    <source>
        <dbReference type="HAMAP-Rule" id="MF_01411"/>
    </source>
</evidence>
<keyword id="KW-0998">Cell outer membrane</keyword>
<keyword id="KW-0472">Membrane</keyword>
<keyword id="KW-1185">Reference proteome</keyword>
<keyword id="KW-0732">Signal</keyword>
<feature type="signal peptide" evidence="1">
    <location>
        <begin position="1"/>
        <end position="23"/>
    </location>
</feature>
<feature type="chain" id="PRO_1000087384" description="LPS-assembly protein LptD">
    <location>
        <begin position="24"/>
        <end position="778"/>
    </location>
</feature>